<protein>
    <recommendedName>
        <fullName evidence="1">Small ribosomal subunit protein uS4</fullName>
    </recommendedName>
    <alternativeName>
        <fullName evidence="3">30S ribosomal protein S4</fullName>
    </alternativeName>
</protein>
<name>RS4_PARPJ</name>
<organism>
    <name type="scientific">Paraburkholderia phytofirmans (strain DSM 17436 / LMG 22146 / PsJN)</name>
    <name type="common">Burkholderia phytofirmans</name>
    <dbReference type="NCBI Taxonomy" id="398527"/>
    <lineage>
        <taxon>Bacteria</taxon>
        <taxon>Pseudomonadati</taxon>
        <taxon>Pseudomonadota</taxon>
        <taxon>Betaproteobacteria</taxon>
        <taxon>Burkholderiales</taxon>
        <taxon>Burkholderiaceae</taxon>
        <taxon>Paraburkholderia</taxon>
    </lineage>
</organism>
<proteinExistence type="inferred from homology"/>
<keyword id="KW-0687">Ribonucleoprotein</keyword>
<keyword id="KW-0689">Ribosomal protein</keyword>
<keyword id="KW-0694">RNA-binding</keyword>
<keyword id="KW-0699">rRNA-binding</keyword>
<reference key="1">
    <citation type="journal article" date="2011" name="J. Bacteriol.">
        <title>Complete genome sequence of the plant growth-promoting endophyte Burkholderia phytofirmans strain PsJN.</title>
        <authorList>
            <person name="Weilharter A."/>
            <person name="Mitter B."/>
            <person name="Shin M.V."/>
            <person name="Chain P.S."/>
            <person name="Nowak J."/>
            <person name="Sessitsch A."/>
        </authorList>
    </citation>
    <scope>NUCLEOTIDE SEQUENCE [LARGE SCALE GENOMIC DNA]</scope>
    <source>
        <strain>DSM 17436 / LMG 22146 / PsJN</strain>
    </source>
</reference>
<accession>B2T726</accession>
<gene>
    <name evidence="1" type="primary">rpsD</name>
    <name type="ordered locus">Bphyt_3619</name>
</gene>
<feature type="chain" id="PRO_1000140701" description="Small ribosomal subunit protein uS4">
    <location>
        <begin position="1"/>
        <end position="207"/>
    </location>
</feature>
<feature type="domain" description="S4 RNA-binding" evidence="1">
    <location>
        <begin position="97"/>
        <end position="158"/>
    </location>
</feature>
<feature type="region of interest" description="Disordered" evidence="2">
    <location>
        <begin position="32"/>
        <end position="55"/>
    </location>
</feature>
<feature type="compositionally biased region" description="Polar residues" evidence="2">
    <location>
        <begin position="42"/>
        <end position="53"/>
    </location>
</feature>
<comment type="function">
    <text evidence="1">One of the primary rRNA binding proteins, it binds directly to 16S rRNA where it nucleates assembly of the body of the 30S subunit.</text>
</comment>
<comment type="function">
    <text evidence="1">With S5 and S12 plays an important role in translational accuracy.</text>
</comment>
<comment type="subunit">
    <text evidence="1">Part of the 30S ribosomal subunit. Contacts protein S5. The interaction surface between S4 and S5 is involved in control of translational fidelity.</text>
</comment>
<comment type="similarity">
    <text evidence="1">Belongs to the universal ribosomal protein uS4 family.</text>
</comment>
<evidence type="ECO:0000255" key="1">
    <source>
        <dbReference type="HAMAP-Rule" id="MF_01306"/>
    </source>
</evidence>
<evidence type="ECO:0000256" key="2">
    <source>
        <dbReference type="SAM" id="MobiDB-lite"/>
    </source>
</evidence>
<evidence type="ECO:0000305" key="3"/>
<dbReference type="EMBL" id="CP001052">
    <property type="protein sequence ID" value="ACD18009.1"/>
    <property type="molecule type" value="Genomic_DNA"/>
</dbReference>
<dbReference type="RefSeq" id="WP_012434565.1">
    <property type="nucleotide sequence ID" value="NC_010681.1"/>
</dbReference>
<dbReference type="SMR" id="B2T726"/>
<dbReference type="STRING" id="398527.Bphyt_3619"/>
<dbReference type="GeneID" id="97311017"/>
<dbReference type="KEGG" id="bpy:Bphyt_3619"/>
<dbReference type="eggNOG" id="COG0522">
    <property type="taxonomic scope" value="Bacteria"/>
</dbReference>
<dbReference type="HOGENOM" id="CLU_092403_0_2_4"/>
<dbReference type="OrthoDB" id="9803672at2"/>
<dbReference type="Proteomes" id="UP000001739">
    <property type="component" value="Chromosome 1"/>
</dbReference>
<dbReference type="GO" id="GO:0015935">
    <property type="term" value="C:small ribosomal subunit"/>
    <property type="evidence" value="ECO:0007669"/>
    <property type="project" value="InterPro"/>
</dbReference>
<dbReference type="GO" id="GO:0019843">
    <property type="term" value="F:rRNA binding"/>
    <property type="evidence" value="ECO:0007669"/>
    <property type="project" value="UniProtKB-UniRule"/>
</dbReference>
<dbReference type="GO" id="GO:0003735">
    <property type="term" value="F:structural constituent of ribosome"/>
    <property type="evidence" value="ECO:0007669"/>
    <property type="project" value="InterPro"/>
</dbReference>
<dbReference type="GO" id="GO:0042274">
    <property type="term" value="P:ribosomal small subunit biogenesis"/>
    <property type="evidence" value="ECO:0007669"/>
    <property type="project" value="TreeGrafter"/>
</dbReference>
<dbReference type="GO" id="GO:0006412">
    <property type="term" value="P:translation"/>
    <property type="evidence" value="ECO:0007669"/>
    <property type="project" value="UniProtKB-UniRule"/>
</dbReference>
<dbReference type="CDD" id="cd00165">
    <property type="entry name" value="S4"/>
    <property type="match status" value="1"/>
</dbReference>
<dbReference type="FunFam" id="1.10.1050.10:FF:000001">
    <property type="entry name" value="30S ribosomal protein S4"/>
    <property type="match status" value="1"/>
</dbReference>
<dbReference type="FunFam" id="3.10.290.10:FF:000001">
    <property type="entry name" value="30S ribosomal protein S4"/>
    <property type="match status" value="1"/>
</dbReference>
<dbReference type="Gene3D" id="1.10.1050.10">
    <property type="entry name" value="Ribosomal Protein S4 Delta 41, Chain A, domain 1"/>
    <property type="match status" value="1"/>
</dbReference>
<dbReference type="Gene3D" id="3.10.290.10">
    <property type="entry name" value="RNA-binding S4 domain"/>
    <property type="match status" value="1"/>
</dbReference>
<dbReference type="HAMAP" id="MF_01306_B">
    <property type="entry name" value="Ribosomal_uS4_B"/>
    <property type="match status" value="1"/>
</dbReference>
<dbReference type="InterPro" id="IPR022801">
    <property type="entry name" value="Ribosomal_uS4"/>
</dbReference>
<dbReference type="InterPro" id="IPR005709">
    <property type="entry name" value="Ribosomal_uS4_bac-type"/>
</dbReference>
<dbReference type="InterPro" id="IPR018079">
    <property type="entry name" value="Ribosomal_uS4_CS"/>
</dbReference>
<dbReference type="InterPro" id="IPR001912">
    <property type="entry name" value="Ribosomal_uS4_N"/>
</dbReference>
<dbReference type="InterPro" id="IPR002942">
    <property type="entry name" value="S4_RNA-bd"/>
</dbReference>
<dbReference type="InterPro" id="IPR036986">
    <property type="entry name" value="S4_RNA-bd_sf"/>
</dbReference>
<dbReference type="NCBIfam" id="NF003717">
    <property type="entry name" value="PRK05327.1"/>
    <property type="match status" value="1"/>
</dbReference>
<dbReference type="NCBIfam" id="TIGR01017">
    <property type="entry name" value="rpsD_bact"/>
    <property type="match status" value="1"/>
</dbReference>
<dbReference type="PANTHER" id="PTHR11831">
    <property type="entry name" value="30S 40S RIBOSOMAL PROTEIN"/>
    <property type="match status" value="1"/>
</dbReference>
<dbReference type="PANTHER" id="PTHR11831:SF4">
    <property type="entry name" value="SMALL RIBOSOMAL SUBUNIT PROTEIN US4M"/>
    <property type="match status" value="1"/>
</dbReference>
<dbReference type="Pfam" id="PF00163">
    <property type="entry name" value="Ribosomal_S4"/>
    <property type="match status" value="1"/>
</dbReference>
<dbReference type="Pfam" id="PF01479">
    <property type="entry name" value="S4"/>
    <property type="match status" value="1"/>
</dbReference>
<dbReference type="SMART" id="SM01390">
    <property type="entry name" value="Ribosomal_S4"/>
    <property type="match status" value="1"/>
</dbReference>
<dbReference type="SMART" id="SM00363">
    <property type="entry name" value="S4"/>
    <property type="match status" value="1"/>
</dbReference>
<dbReference type="SUPFAM" id="SSF55174">
    <property type="entry name" value="Alpha-L RNA-binding motif"/>
    <property type="match status" value="1"/>
</dbReference>
<dbReference type="PROSITE" id="PS00632">
    <property type="entry name" value="RIBOSOMAL_S4"/>
    <property type="match status" value="1"/>
</dbReference>
<dbReference type="PROSITE" id="PS50889">
    <property type="entry name" value="S4"/>
    <property type="match status" value="1"/>
</dbReference>
<sequence>MARYIGPKAKLSRREGTDLFLKSARRSLADKCKLDSKPGQHGRTSGARTSDYGTQLREKQKVKRIYGVLERQFRRYFAEADRLKGNTGENLLQLLESRLDNVVYRMGFGSTRAEARQLVSHKAIVVNGVVSNIPSMQVKAGDVVAVRETKKKQARILEALSLAEQGGMPSWVAVDSKKFEGTFKQKPERSDIAGDINESLIVELYSR</sequence>